<organism>
    <name type="scientific">Propionibacterium freudenreichii subsp. shermanii</name>
    <dbReference type="NCBI Taxonomy" id="1752"/>
    <lineage>
        <taxon>Bacteria</taxon>
        <taxon>Bacillati</taxon>
        <taxon>Actinomycetota</taxon>
        <taxon>Actinomycetes</taxon>
        <taxon>Propionibacteriales</taxon>
        <taxon>Propionibacteriaceae</taxon>
        <taxon>Propionibacterium</taxon>
    </lineage>
</organism>
<feature type="initiator methionine" description="Removed" evidence="3">
    <location>
        <position position="1"/>
    </location>
</feature>
<feature type="chain" id="PRO_0000194273" description="Methylmalonyl-CoA mutase large subunit">
    <location>
        <begin position="2"/>
        <end position="728"/>
    </location>
</feature>
<feature type="domain" description="B12-binding" evidence="1">
    <location>
        <begin position="597"/>
        <end position="728"/>
    </location>
</feature>
<feature type="binding site" evidence="2 12">
    <location>
        <position position="75"/>
    </location>
    <ligand>
        <name>(R)-methylmalonyl-CoA</name>
        <dbReference type="ChEBI" id="CHEBI:57326"/>
    </ligand>
</feature>
<feature type="binding site" evidence="2 12">
    <location>
        <position position="78"/>
    </location>
    <ligand>
        <name>(R)-methylmalonyl-CoA</name>
        <dbReference type="ChEBI" id="CHEBI:57326"/>
    </ligand>
</feature>
<feature type="binding site" evidence="2 12">
    <location>
        <position position="82"/>
    </location>
    <ligand>
        <name>(R)-methylmalonyl-CoA</name>
        <dbReference type="ChEBI" id="CHEBI:57326"/>
    </ligand>
</feature>
<feature type="binding site" evidence="2 12">
    <location>
        <position position="85"/>
    </location>
    <ligand>
        <name>(R)-methylmalonyl-CoA</name>
        <dbReference type="ChEBI" id="CHEBI:57326"/>
    </ligand>
</feature>
<feature type="binding site" evidence="2 12">
    <location>
        <position position="87"/>
    </location>
    <ligand>
        <name>(R)-methylmalonyl-CoA</name>
        <dbReference type="ChEBI" id="CHEBI:57326"/>
    </ligand>
</feature>
<feature type="binding site" evidence="2 12">
    <location>
        <position position="89"/>
    </location>
    <ligand>
        <name>(R)-methylmalonyl-CoA</name>
        <dbReference type="ChEBI" id="CHEBI:57326"/>
    </ligand>
</feature>
<feature type="binding site" evidence="2 12">
    <location>
        <position position="114"/>
    </location>
    <ligand>
        <name>(R)-methylmalonyl-CoA</name>
        <dbReference type="ChEBI" id="CHEBI:57326"/>
    </ligand>
</feature>
<feature type="binding site" evidence="2 4 9 12">
    <location>
        <position position="117"/>
    </location>
    <ligand>
        <name>cob(II)alamin</name>
        <dbReference type="ChEBI" id="CHEBI:16304"/>
    </ligand>
</feature>
<feature type="binding site" evidence="2 4 9 12">
    <location>
        <position position="139"/>
    </location>
    <ligand>
        <name>cob(II)alamin</name>
        <dbReference type="ChEBI" id="CHEBI:16304"/>
    </ligand>
</feature>
<feature type="binding site" evidence="2 12">
    <location>
        <position position="195"/>
    </location>
    <ligand>
        <name>(R)-methylmalonyl-CoA</name>
        <dbReference type="ChEBI" id="CHEBI:57326"/>
    </ligand>
</feature>
<feature type="binding site" evidence="2 12">
    <location>
        <position position="197"/>
    </location>
    <ligand>
        <name>(R)-methylmalonyl-CoA</name>
        <dbReference type="ChEBI" id="CHEBI:57326"/>
    </ligand>
</feature>
<feature type="binding site" evidence="2 4 9 12">
    <location>
        <position position="206"/>
    </location>
    <ligand>
        <name>cob(II)alamin</name>
        <dbReference type="ChEBI" id="CHEBI:16304"/>
    </ligand>
</feature>
<feature type="binding site" evidence="2 12">
    <location>
        <position position="207"/>
    </location>
    <ligand>
        <name>(R)-methylmalonyl-CoA</name>
        <dbReference type="ChEBI" id="CHEBI:57326"/>
    </ligand>
</feature>
<feature type="binding site" evidence="2 4 9 12">
    <location>
        <position position="207"/>
    </location>
    <ligand>
        <name>cob(II)alamin</name>
        <dbReference type="ChEBI" id="CHEBI:16304"/>
    </ligand>
</feature>
<feature type="binding site" evidence="2 12">
    <location>
        <position position="244"/>
    </location>
    <ligand>
        <name>(R)-methylmalonyl-CoA</name>
        <dbReference type="ChEBI" id="CHEBI:57326"/>
    </ligand>
</feature>
<feature type="binding site" evidence="2 12">
    <location>
        <position position="283"/>
    </location>
    <ligand>
        <name>(R)-methylmalonyl-CoA</name>
        <dbReference type="ChEBI" id="CHEBI:57326"/>
    </ligand>
</feature>
<feature type="binding site" evidence="2 12">
    <location>
        <position position="285"/>
    </location>
    <ligand>
        <name>(R)-methylmalonyl-CoA</name>
        <dbReference type="ChEBI" id="CHEBI:57326"/>
    </ligand>
</feature>
<feature type="binding site" evidence="2 4 9 12">
    <location>
        <position position="333"/>
    </location>
    <ligand>
        <name>cob(II)alamin</name>
        <dbReference type="ChEBI" id="CHEBI:16304"/>
    </ligand>
</feature>
<feature type="binding site" evidence="2 4 9 12">
    <location>
        <position position="370"/>
    </location>
    <ligand>
        <name>cob(II)alamin</name>
        <dbReference type="ChEBI" id="CHEBI:16304"/>
    </ligand>
</feature>
<feature type="binding site" evidence="2 4 9 12">
    <location>
        <position position="373"/>
    </location>
    <ligand>
        <name>cob(II)alamin</name>
        <dbReference type="ChEBI" id="CHEBI:16304"/>
    </ligand>
</feature>
<feature type="binding site" evidence="2 4 9 12">
    <location>
        <position position="609"/>
    </location>
    <ligand>
        <name>cob(II)alamin</name>
        <dbReference type="ChEBI" id="CHEBI:16304"/>
    </ligand>
</feature>
<feature type="binding site" description="axial binding residue" evidence="2 4 9 12">
    <location>
        <position position="610"/>
    </location>
    <ligand>
        <name>cob(II)alamin</name>
        <dbReference type="ChEBI" id="CHEBI:16304"/>
    </ligand>
    <ligandPart>
        <name>Co</name>
        <dbReference type="ChEBI" id="CHEBI:27638"/>
    </ligandPart>
</feature>
<feature type="binding site" evidence="2 4 9 12">
    <location>
        <position position="611"/>
    </location>
    <ligand>
        <name>cob(II)alamin</name>
        <dbReference type="ChEBI" id="CHEBI:16304"/>
    </ligand>
</feature>
<feature type="binding site" evidence="2 4 9 12">
    <location>
        <position position="612"/>
    </location>
    <ligand>
        <name>cob(II)alamin</name>
        <dbReference type="ChEBI" id="CHEBI:16304"/>
    </ligand>
</feature>
<feature type="binding site" evidence="2 4 9 12">
    <location>
        <position position="655"/>
    </location>
    <ligand>
        <name>cob(II)alamin</name>
        <dbReference type="ChEBI" id="CHEBI:16304"/>
    </ligand>
</feature>
<feature type="binding site" evidence="2 4 9 12">
    <location>
        <position position="657"/>
    </location>
    <ligand>
        <name>cob(II)alamin</name>
        <dbReference type="ChEBI" id="CHEBI:16304"/>
    </ligand>
</feature>
<feature type="binding site" evidence="2 4 9 12">
    <location>
        <position position="686"/>
    </location>
    <ligand>
        <name>cob(II)alamin</name>
        <dbReference type="ChEBI" id="CHEBI:16304"/>
    </ligand>
</feature>
<feature type="binding site" evidence="2 4 9 12">
    <location>
        <position position="709"/>
    </location>
    <ligand>
        <name>cob(II)alamin</name>
        <dbReference type="ChEBI" id="CHEBI:16304"/>
    </ligand>
</feature>
<feature type="site" description="Transition state stabilizer" evidence="8">
    <location>
        <position position="89"/>
    </location>
</feature>
<feature type="mutagenesis site" description="Does not significantly affect affinity for succiny-CoA, but kcat is lowered about 580-fold." evidence="5">
    <original>Y</original>
    <variation>F</variation>
    <location>
        <position position="89"/>
    </location>
</feature>
<feature type="helix" evidence="18">
    <location>
        <begin position="7"/>
        <end position="9"/>
    </location>
</feature>
<feature type="helix" evidence="16">
    <location>
        <begin position="21"/>
        <end position="32"/>
    </location>
</feature>
<feature type="helix" evidence="16">
    <location>
        <begin position="52"/>
        <end position="55"/>
    </location>
</feature>
<feature type="turn" evidence="17">
    <location>
        <begin position="59"/>
        <end position="62"/>
    </location>
</feature>
<feature type="strand" evidence="16">
    <location>
        <begin position="74"/>
        <end position="77"/>
    </location>
</feature>
<feature type="helix" evidence="16">
    <location>
        <begin position="78"/>
        <end position="80"/>
    </location>
</feature>
<feature type="strand" evidence="16">
    <location>
        <begin position="85"/>
        <end position="90"/>
    </location>
</feature>
<feature type="helix" evidence="16">
    <location>
        <begin position="95"/>
        <end position="107"/>
    </location>
</feature>
<feature type="strand" evidence="16">
    <location>
        <begin position="112"/>
        <end position="115"/>
    </location>
</feature>
<feature type="helix" evidence="16">
    <location>
        <begin position="119"/>
        <end position="123"/>
    </location>
</feature>
<feature type="strand" evidence="17">
    <location>
        <begin position="127"/>
        <end position="129"/>
    </location>
</feature>
<feature type="helix" evidence="16">
    <location>
        <begin position="130"/>
        <end position="135"/>
    </location>
</feature>
<feature type="turn" evidence="16">
    <location>
        <begin position="136"/>
        <end position="138"/>
    </location>
</feature>
<feature type="strand" evidence="16">
    <location>
        <begin position="139"/>
        <end position="141"/>
    </location>
</feature>
<feature type="helix" evidence="16">
    <location>
        <begin position="146"/>
        <end position="152"/>
    </location>
</feature>
<feature type="turn" evidence="16">
    <location>
        <begin position="153"/>
        <end position="155"/>
    </location>
</feature>
<feature type="turn" evidence="16">
    <location>
        <begin position="158"/>
        <end position="160"/>
    </location>
</feature>
<feature type="strand" evidence="16">
    <location>
        <begin position="162"/>
        <end position="165"/>
    </location>
</feature>
<feature type="strand" evidence="19">
    <location>
        <begin position="168"/>
        <end position="170"/>
    </location>
</feature>
<feature type="helix" evidence="16">
    <location>
        <begin position="171"/>
        <end position="184"/>
    </location>
</feature>
<feature type="helix" evidence="16">
    <location>
        <begin position="189"/>
        <end position="191"/>
    </location>
</feature>
<feature type="strand" evidence="16">
    <location>
        <begin position="193"/>
        <end position="196"/>
    </location>
</feature>
<feature type="helix" evidence="16">
    <location>
        <begin position="201"/>
        <end position="205"/>
    </location>
</feature>
<feature type="helix" evidence="16">
    <location>
        <begin position="214"/>
        <end position="231"/>
    </location>
</feature>
<feature type="strand" evidence="16">
    <location>
        <begin position="238"/>
        <end position="241"/>
    </location>
</feature>
<feature type="helix" evidence="16">
    <location>
        <begin position="243"/>
        <end position="248"/>
    </location>
</feature>
<feature type="helix" evidence="16">
    <location>
        <begin position="252"/>
        <end position="272"/>
    </location>
</feature>
<feature type="helix" evidence="16">
    <location>
        <begin position="277"/>
        <end position="279"/>
    </location>
</feature>
<feature type="helix" evidence="16">
    <location>
        <begin position="281"/>
        <end position="283"/>
    </location>
</feature>
<feature type="strand" evidence="16">
    <location>
        <begin position="284"/>
        <end position="290"/>
    </location>
</feature>
<feature type="helix" evidence="16">
    <location>
        <begin position="294"/>
        <end position="313"/>
    </location>
</feature>
<feature type="helix" evidence="16">
    <location>
        <begin position="320"/>
        <end position="323"/>
    </location>
</feature>
<feature type="strand" evidence="16">
    <location>
        <begin position="327"/>
        <end position="331"/>
    </location>
</feature>
<feature type="helix" evidence="16">
    <location>
        <begin position="333"/>
        <end position="335"/>
    </location>
</feature>
<feature type="strand" evidence="16">
    <location>
        <begin position="338"/>
        <end position="340"/>
    </location>
</feature>
<feature type="helix" evidence="16">
    <location>
        <begin position="343"/>
        <end position="357"/>
    </location>
</feature>
<feature type="strand" evidence="16">
    <location>
        <begin position="361"/>
        <end position="364"/>
    </location>
</feature>
<feature type="turn" evidence="16">
    <location>
        <begin position="368"/>
        <end position="372"/>
    </location>
</feature>
<feature type="helix" evidence="16">
    <location>
        <begin position="377"/>
        <end position="392"/>
    </location>
</feature>
<feature type="strand" evidence="16">
    <location>
        <begin position="398"/>
        <end position="401"/>
    </location>
</feature>
<feature type="turn" evidence="16">
    <location>
        <begin position="402"/>
        <end position="405"/>
    </location>
</feature>
<feature type="helix" evidence="16">
    <location>
        <begin position="407"/>
        <end position="429"/>
    </location>
</feature>
<feature type="helix" evidence="16">
    <location>
        <begin position="433"/>
        <end position="439"/>
    </location>
</feature>
<feature type="helix" evidence="16">
    <location>
        <begin position="441"/>
        <end position="458"/>
    </location>
</feature>
<feature type="strand" evidence="18">
    <location>
        <begin position="460"/>
        <end position="462"/>
    </location>
</feature>
<feature type="turn" evidence="16">
    <location>
        <begin position="465"/>
        <end position="467"/>
    </location>
</feature>
<feature type="strand" evidence="16">
    <location>
        <begin position="468"/>
        <end position="470"/>
    </location>
</feature>
<feature type="helix" evidence="16">
    <location>
        <begin position="485"/>
        <end position="502"/>
    </location>
</feature>
<feature type="helix" evidence="16">
    <location>
        <begin position="505"/>
        <end position="520"/>
    </location>
</feature>
<feature type="helix" evidence="16">
    <location>
        <begin position="527"/>
        <end position="529"/>
    </location>
</feature>
<feature type="helix" evidence="16">
    <location>
        <begin position="531"/>
        <end position="540"/>
    </location>
</feature>
<feature type="helix" evidence="16">
    <location>
        <begin position="545"/>
        <end position="556"/>
    </location>
</feature>
<feature type="helix" evidence="16">
    <location>
        <begin position="570"/>
        <end position="573"/>
    </location>
</feature>
<feature type="turn" evidence="18">
    <location>
        <begin position="574"/>
        <end position="576"/>
    </location>
</feature>
<feature type="helix" evidence="16">
    <location>
        <begin position="578"/>
        <end position="594"/>
    </location>
</feature>
<feature type="strand" evidence="16">
    <location>
        <begin position="599"/>
        <end position="603"/>
    </location>
</feature>
<feature type="strand" evidence="17">
    <location>
        <begin position="605"/>
        <end position="607"/>
    </location>
</feature>
<feature type="helix" evidence="16">
    <location>
        <begin position="612"/>
        <end position="623"/>
    </location>
</feature>
<feature type="strand" evidence="16">
    <location>
        <begin position="627"/>
        <end position="630"/>
    </location>
</feature>
<feature type="strand" evidence="17">
    <location>
        <begin position="633"/>
        <end position="635"/>
    </location>
</feature>
<feature type="helix" evidence="16">
    <location>
        <begin position="637"/>
        <end position="646"/>
    </location>
</feature>
<feature type="strand" evidence="16">
    <location>
        <begin position="650"/>
        <end position="656"/>
    </location>
</feature>
<feature type="helix" evidence="16">
    <location>
        <begin position="661"/>
        <end position="674"/>
    </location>
</feature>
<feature type="strand" evidence="16">
    <location>
        <begin position="680"/>
        <end position="687"/>
    </location>
</feature>
<feature type="helix" evidence="16">
    <location>
        <begin position="690"/>
        <end position="692"/>
    </location>
</feature>
<feature type="helix" evidence="16">
    <location>
        <begin position="693"/>
        <end position="698"/>
    </location>
</feature>
<feature type="strand" evidence="16">
    <location>
        <begin position="701"/>
        <end position="705"/>
    </location>
</feature>
<feature type="helix" evidence="16">
    <location>
        <begin position="711"/>
        <end position="726"/>
    </location>
</feature>
<comment type="function">
    <text evidence="5 7">Catalyzes the reversible conversion of succinyl-CoA to (R)-methylmalonyl-CoA through a radical mechanism (PubMed:9772164). Is involved in the fermentation of pyruvate to propanoate that occurs in Propionibacteria (Probable).</text>
</comment>
<comment type="catalytic activity">
    <reaction evidence="5">
        <text>(R)-methylmalonyl-CoA = succinyl-CoA</text>
        <dbReference type="Rhea" id="RHEA:22888"/>
        <dbReference type="ChEBI" id="CHEBI:57292"/>
        <dbReference type="ChEBI" id="CHEBI:57326"/>
        <dbReference type="EC" id="5.4.99.2"/>
    </reaction>
    <physiologicalReaction direction="right-to-left" evidence="6">
        <dbReference type="Rhea" id="RHEA:22890"/>
    </physiologicalReaction>
</comment>
<comment type="cofactor">
    <cofactor evidence="2 4 5">
        <name>adenosylcob(III)alamin</name>
        <dbReference type="ChEBI" id="CHEBI:18408"/>
    </cofactor>
</comment>
<comment type="biophysicochemical properties">
    <kinetics>
        <KM evidence="5">96 uM for succinyl-CoA</KM>
        <text evidence="5">kcat is 48 sec(-1) with succinyl-CoA as substrate.</text>
    </kinetics>
</comment>
<comment type="subunit">
    <text evidence="3 4">Heterodimer of an alpha and a beta chain.</text>
</comment>
<comment type="interaction">
    <interactant intactId="EBI-1027336">
        <id>P11653</id>
    </interactant>
    <interactant intactId="EBI-1027328">
        <id>P11652</id>
        <label>mutA</label>
    </interactant>
    <organismsDiffer>false</organismsDiffer>
    <experiments>4</experiments>
</comment>
<comment type="similarity">
    <text evidence="6">Belongs to the methylmalonyl-CoA mutase family.</text>
</comment>
<gene>
    <name type="primary">mutB</name>
</gene>
<name>MUTB_PROFR</name>
<proteinExistence type="evidence at protein level"/>
<protein>
    <recommendedName>
        <fullName>Methylmalonyl-CoA mutase large subunit</fullName>
        <ecNumber evidence="5">5.4.99.2</ecNumber>
    </recommendedName>
    <alternativeName>
        <fullName>MCM-alpha</fullName>
    </alternativeName>
</protein>
<keyword id="KW-0002">3D-structure</keyword>
<keyword id="KW-0846">Cobalamin</keyword>
<keyword id="KW-0170">Cobalt</keyword>
<keyword id="KW-0903">Direct protein sequencing</keyword>
<keyword id="KW-0413">Isomerase</keyword>
<keyword id="KW-0479">Metal-binding</keyword>
<dbReference type="EC" id="5.4.99.2" evidence="5"/>
<dbReference type="EMBL" id="X14965">
    <property type="protein sequence ID" value="CAA33090.1"/>
    <property type="molecule type" value="Genomic_DNA"/>
</dbReference>
<dbReference type="PIR" id="S04641">
    <property type="entry name" value="S04641"/>
</dbReference>
<dbReference type="PDB" id="1E1C">
    <property type="method" value="X-ray"/>
    <property type="resolution" value="2.62 A"/>
    <property type="chains" value="A/C=2-728"/>
</dbReference>
<dbReference type="PDB" id="1REQ">
    <property type="method" value="X-ray"/>
    <property type="resolution" value="2.00 A"/>
    <property type="chains" value="A/C=2-728"/>
</dbReference>
<dbReference type="PDB" id="2REQ">
    <property type="method" value="X-ray"/>
    <property type="resolution" value="2.50 A"/>
    <property type="chains" value="A/C=2-728"/>
</dbReference>
<dbReference type="PDB" id="3REQ">
    <property type="method" value="X-ray"/>
    <property type="resolution" value="2.70 A"/>
    <property type="chains" value="A=2-728"/>
</dbReference>
<dbReference type="PDB" id="4REQ">
    <property type="method" value="X-ray"/>
    <property type="resolution" value="2.20 A"/>
    <property type="chains" value="A/C=2-728"/>
</dbReference>
<dbReference type="PDB" id="5REQ">
    <property type="method" value="X-ray"/>
    <property type="resolution" value="2.20 A"/>
    <property type="chains" value="A/C=2-728"/>
</dbReference>
<dbReference type="PDB" id="6REQ">
    <property type="method" value="X-ray"/>
    <property type="resolution" value="2.20 A"/>
    <property type="chains" value="A/C=2-728"/>
</dbReference>
<dbReference type="PDB" id="7REQ">
    <property type="method" value="X-ray"/>
    <property type="resolution" value="2.20 A"/>
    <property type="chains" value="A/C=2-728"/>
</dbReference>
<dbReference type="PDBsum" id="1E1C"/>
<dbReference type="PDBsum" id="1REQ"/>
<dbReference type="PDBsum" id="2REQ"/>
<dbReference type="PDBsum" id="3REQ"/>
<dbReference type="PDBsum" id="4REQ"/>
<dbReference type="PDBsum" id="5REQ"/>
<dbReference type="PDBsum" id="6REQ"/>
<dbReference type="PDBsum" id="7REQ"/>
<dbReference type="SMR" id="P11653"/>
<dbReference type="DIP" id="DIP-6148N"/>
<dbReference type="IntAct" id="P11653">
    <property type="interactions" value="1"/>
</dbReference>
<dbReference type="MINT" id="P11653"/>
<dbReference type="BioCyc" id="MetaCyc:MONOMER-13077"/>
<dbReference type="BRENDA" id="5.4.99.2">
    <property type="organism ID" value="5032"/>
</dbReference>
<dbReference type="SABIO-RK" id="P11653"/>
<dbReference type="EvolutionaryTrace" id="P11653"/>
<dbReference type="GO" id="GO:0005737">
    <property type="term" value="C:cytoplasm"/>
    <property type="evidence" value="ECO:0007669"/>
    <property type="project" value="TreeGrafter"/>
</dbReference>
<dbReference type="GO" id="GO:0031419">
    <property type="term" value="F:cobalamin binding"/>
    <property type="evidence" value="ECO:0007669"/>
    <property type="project" value="UniProtKB-KW"/>
</dbReference>
<dbReference type="GO" id="GO:0046872">
    <property type="term" value="F:metal ion binding"/>
    <property type="evidence" value="ECO:0007669"/>
    <property type="project" value="UniProtKB-KW"/>
</dbReference>
<dbReference type="GO" id="GO:0004494">
    <property type="term" value="F:methylmalonyl-CoA mutase activity"/>
    <property type="evidence" value="ECO:0007669"/>
    <property type="project" value="UniProtKB-EC"/>
</dbReference>
<dbReference type="GO" id="GO:0019678">
    <property type="term" value="P:propionate metabolic process, methylmalonyl pathway"/>
    <property type="evidence" value="ECO:0007669"/>
    <property type="project" value="TreeGrafter"/>
</dbReference>
<dbReference type="CDD" id="cd02071">
    <property type="entry name" value="MM_CoA_mut_B12_BD"/>
    <property type="match status" value="1"/>
</dbReference>
<dbReference type="CDD" id="cd03679">
    <property type="entry name" value="MM_CoA_mutase_alpha_like"/>
    <property type="match status" value="1"/>
</dbReference>
<dbReference type="FunFam" id="3.40.50.280:FF:000002">
    <property type="entry name" value="Methylmalonyl-CoA mutase, mitochondrial"/>
    <property type="match status" value="1"/>
</dbReference>
<dbReference type="FunFam" id="3.20.20.240:FF:000001">
    <property type="entry name" value="Probable methylmalonyl-coa mutase"/>
    <property type="match status" value="1"/>
</dbReference>
<dbReference type="Gene3D" id="3.40.50.280">
    <property type="entry name" value="Cobalamin-binding domain"/>
    <property type="match status" value="1"/>
</dbReference>
<dbReference type="Gene3D" id="3.20.20.240">
    <property type="entry name" value="Methylmalonyl-CoA mutase"/>
    <property type="match status" value="1"/>
</dbReference>
<dbReference type="InterPro" id="IPR006159">
    <property type="entry name" value="Acid_CoA_mut_C"/>
</dbReference>
<dbReference type="InterPro" id="IPR016176">
    <property type="entry name" value="Cbl-dep_enz_cat"/>
</dbReference>
<dbReference type="InterPro" id="IPR006158">
    <property type="entry name" value="Cobalamin-bd"/>
</dbReference>
<dbReference type="InterPro" id="IPR036724">
    <property type="entry name" value="Cobalamin-bd_sf"/>
</dbReference>
<dbReference type="InterPro" id="IPR006099">
    <property type="entry name" value="MeMalonylCoA_mutase_a/b_cat"/>
</dbReference>
<dbReference type="InterPro" id="IPR006098">
    <property type="entry name" value="MMCoA_mutase_a_cat"/>
</dbReference>
<dbReference type="NCBIfam" id="TIGR00640">
    <property type="entry name" value="acid_CoA_mut_C"/>
    <property type="match status" value="1"/>
</dbReference>
<dbReference type="NCBIfam" id="TIGR00641">
    <property type="entry name" value="acid_CoA_mut_N"/>
    <property type="match status" value="1"/>
</dbReference>
<dbReference type="NCBIfam" id="NF006944">
    <property type="entry name" value="PRK09426.1"/>
    <property type="match status" value="1"/>
</dbReference>
<dbReference type="PANTHER" id="PTHR48101:SF4">
    <property type="entry name" value="METHYLMALONYL-COA MUTASE, MITOCHONDRIAL"/>
    <property type="match status" value="1"/>
</dbReference>
<dbReference type="PANTHER" id="PTHR48101">
    <property type="entry name" value="METHYLMALONYL-COA MUTASE, MITOCHONDRIAL-RELATED"/>
    <property type="match status" value="1"/>
</dbReference>
<dbReference type="Pfam" id="PF02310">
    <property type="entry name" value="B12-binding"/>
    <property type="match status" value="1"/>
</dbReference>
<dbReference type="Pfam" id="PF01642">
    <property type="entry name" value="MM_CoA_mutase"/>
    <property type="match status" value="1"/>
</dbReference>
<dbReference type="SUPFAM" id="SSF52242">
    <property type="entry name" value="Cobalamin (vitamin B12)-binding domain"/>
    <property type="match status" value="1"/>
</dbReference>
<dbReference type="SUPFAM" id="SSF51703">
    <property type="entry name" value="Cobalamin (vitamin B12)-dependent enzymes"/>
    <property type="match status" value="1"/>
</dbReference>
<dbReference type="PROSITE" id="PS51332">
    <property type="entry name" value="B12_BINDING"/>
    <property type="match status" value="1"/>
</dbReference>
<dbReference type="PROSITE" id="PS00544">
    <property type="entry name" value="METMALONYL_COA_MUTASE"/>
    <property type="match status" value="1"/>
</dbReference>
<sequence>MSTLPRFDSVDLGNAPVPADAARRFEELAAKAGTGEAWETAEQIPVGTLFNEDVYKDMDWLDTYAGIPPFVHGPYATMYAFRPWTIRQYAGFSTAKESNAFYRRNLAAGQKGLSVAFDLPTHRGYDSDNPRVAGDVGMAGVAIDSIYDMRELFAGIPLDQMSVSMTMNGAVLPILALYVVTAEEQGVKPEQLAGTIQNDILKEFMVRNTYIYPPQPSMRIISEIFAYTSANMPKWNSISISGYHMQEAGATADIEMAYTLADGVDYIRAGESVGLNVDQFAPRLSFFWGIGMNFFMEVAKLRAARMLWAKLVHQFGPKNPKSMSLRTHSQTSGWSLTAQDVYNNVVRTCIEAMAATQGHTQSLHTNSLDEAIALPTDFSARIARNTQLFLQQESGTTRVIDPWSGSAYVEELTWDLARKAWGHIQEVEKVGGMAKAIEKGIPKMRIEEAAARTQARIDSGRQPLIGVNKYRLEHEPPLDVLKVDNSTVLAEQKAKLVKLRAERDPEKVKAALDKITWAAGNPDDKDPDRNLLKLCIDAGRAMATVGEMSDALEKVFGRYTAQIRTISGVYSKEVKNTPEVEEARELVEEFEQAEGRRPRILLAKMGQDGHDRGQKVIATAYADLGFDVDVGPLFQTPEETARQAVEADVHVVGVSSLAGGHLTLVPALRKELDKLGRPDILITVGGVIPEQDFDELRKDGAVEIYTPGTVIPESAISLVKKLRASLDA</sequence>
<reference key="1">
    <citation type="journal article" date="1989" name="Biochem. J.">
        <title>Cloning and structural characterization of the genes coding for adenosylcobalamin-dependent methylmalonyl-CoA mutase from Propionibacterium shermanii.</title>
        <authorList>
            <person name="Marsh E.N."/>
            <person name="McKie N."/>
            <person name="Davis N.K."/>
            <person name="Leadlay P.F."/>
        </authorList>
    </citation>
    <scope>NUCLEOTIDE SEQUENCE [GENOMIC DNA]</scope>
    <scope>PROTEIN SEQUENCE OF 2-21 AND 104-110</scope>
    <scope>SUBUNIT</scope>
    <scope>FUNCTION</scope>
    <source>
        <strain>NCIMB 9885</strain>
    </source>
</reference>
<reference key="2">
    <citation type="journal article" date="1989" name="Biochem. J.">
        <title>Methylmalonyl-CoA mutase from Propionibacterium shermanii. Evidence for the presence of two masked cysteine residues.</title>
        <authorList>
            <person name="Marsh E.N."/>
            <person name="Leadlay P.F."/>
        </authorList>
    </citation>
    <scope>PROTEIN SEQUENCE OF 534-537</scope>
    <source>
        <strain>NCIMB 9885</strain>
    </source>
</reference>
<reference evidence="9" key="3">
    <citation type="journal article" date="1996" name="Structure">
        <title>How coenzyme B12 radicals are generated: the crystal structure of methylmalonyl-coenzyme A mutase at 2-A resolution.</title>
        <authorList>
            <person name="Mancia F."/>
            <person name="Keep N.H."/>
            <person name="Nakagawa A."/>
            <person name="Leadlay P.F."/>
            <person name="McSweeney S."/>
            <person name="Rasmussen B."/>
            <person name="Bosecke P."/>
            <person name="Diat O."/>
            <person name="Evans P.R."/>
        </authorList>
    </citation>
    <scope>X-RAY CRYSTALLOGRAPHY (2.0 ANGSTROMS) IN COMPLEX WITH COBALAMIN; DESULFO-COENZYME A AND METHYLMALONYL-COA MUTASE SMALL SUBUNIT</scope>
    <scope>COFACTOR</scope>
    <scope>SUBUNIT</scope>
    <source>
        <strain>NCIMB 9885</strain>
    </source>
</reference>
<reference evidence="13" key="4">
    <citation type="journal article" date="1998" name="Biochemistry">
        <title>Stabilization of radical intermediates by an active-site tyrosine residue in methylmalonyl-CoA mutase.</title>
        <authorList>
            <person name="Thoma N.H."/>
            <person name="Meier T.W."/>
            <person name="Evans P.R."/>
            <person name="Leadlay P.F."/>
        </authorList>
    </citation>
    <scope>X-RAY CRYSTALLOGRAPHY (2.20 ANGSTROMS) OF MUTANT PHE-89 IN COMPLEX WITH COBALAMIN; SUBSTRATE ANALOGS AND METHYLMALONYL-COA MUTASE SMALL SUBUNIT</scope>
    <scope>FUNCTION</scope>
    <scope>CATALYTIC ACTIVITY</scope>
    <scope>COFACTOR</scope>
    <scope>BIOPHYSICOCHEMICAL PROPERTIES</scope>
    <scope>MUTAGENESIS OF TYR-89</scope>
</reference>
<reference evidence="10 11" key="5">
    <citation type="journal article" date="1998" name="Structure">
        <title>Conformational changes on substrate binding to methylmalonyl CoA mutase and new insights into the free radical mechanism.</title>
        <authorList>
            <person name="Mancia F."/>
            <person name="Evans P.R."/>
        </authorList>
    </citation>
    <scope>X-RAY CRYSTALLOGRAPHY (2.20 ANGSTROMS) IN COMPLEXES WITH COBALAMIN; COENZYME A AND METHYLMALONYL-COA MUTASE SMALL SUBUNIT</scope>
</reference>
<reference evidence="12 14 15" key="6">
    <citation type="journal article" date="1999" name="Biochemistry">
        <title>Crystal structure of substrate complexes of methylmalonyl-CoA mutase.</title>
        <authorList>
            <person name="Mancia F."/>
            <person name="Smith G.A."/>
            <person name="Evans P.R."/>
        </authorList>
    </citation>
    <scope>X-RAY CRYSTALLOGRAPHY (2.20 ANGSTROMS) IN COMPLEXES WITH (R)-METHYLMALONYL-COA; SUCCINYL-COA; COBALAMIN; 5'-DEOXYADENOSINE; 3- AND 2-CARBOXYPROPYL-COA INHIBITORS AND METHYLMALONYL-COA MUTASE SMALL SUBUNIT</scope>
    <scope>COFACTOR</scope>
</reference>
<accession>P11653</accession>
<evidence type="ECO:0000255" key="1">
    <source>
        <dbReference type="PROSITE-ProRule" id="PRU00666"/>
    </source>
</evidence>
<evidence type="ECO:0000269" key="2">
    <source>
    </source>
</evidence>
<evidence type="ECO:0000269" key="3">
    <source>
    </source>
</evidence>
<evidence type="ECO:0000269" key="4">
    <source>
    </source>
</evidence>
<evidence type="ECO:0000269" key="5">
    <source>
    </source>
</evidence>
<evidence type="ECO:0000305" key="6"/>
<evidence type="ECO:0000305" key="7">
    <source>
    </source>
</evidence>
<evidence type="ECO:0000305" key="8">
    <source>
    </source>
</evidence>
<evidence type="ECO:0007744" key="9">
    <source>
        <dbReference type="PDB" id="1REQ"/>
    </source>
</evidence>
<evidence type="ECO:0007744" key="10">
    <source>
        <dbReference type="PDB" id="2REQ"/>
    </source>
</evidence>
<evidence type="ECO:0007744" key="11">
    <source>
        <dbReference type="PDB" id="3REQ"/>
    </source>
</evidence>
<evidence type="ECO:0007744" key="12">
    <source>
        <dbReference type="PDB" id="4REQ"/>
    </source>
</evidence>
<evidence type="ECO:0007744" key="13">
    <source>
        <dbReference type="PDB" id="5REQ"/>
    </source>
</evidence>
<evidence type="ECO:0007744" key="14">
    <source>
        <dbReference type="PDB" id="6REQ"/>
    </source>
</evidence>
<evidence type="ECO:0007744" key="15">
    <source>
        <dbReference type="PDB" id="7REQ"/>
    </source>
</evidence>
<evidence type="ECO:0007829" key="16">
    <source>
        <dbReference type="PDB" id="1REQ"/>
    </source>
</evidence>
<evidence type="ECO:0007829" key="17">
    <source>
        <dbReference type="PDB" id="3REQ"/>
    </source>
</evidence>
<evidence type="ECO:0007829" key="18">
    <source>
        <dbReference type="PDB" id="4REQ"/>
    </source>
</evidence>
<evidence type="ECO:0007829" key="19">
    <source>
        <dbReference type="PDB" id="6REQ"/>
    </source>
</evidence>